<proteinExistence type="inferred from homology"/>
<sequence>MQNVDNTAVIDAANALPGRLTSIPVSPLHAVHGHSMTYIPEGMDLAFFAMGCFWGAERLFWQQPGVYSTAAGYSGGHTPNPTYHEVCSGRTGHAEVVRVVFDPAVISYQQLLQIFWENHDPAQGMRQGGDVGTQYRSAIYVLTPEQEEQAHKSRERFQQAMEKAGDQRVITSEITVALPFYYAEDDHQQYLHKNPHGYCGLGGIGVCLPPNV</sequence>
<dbReference type="EC" id="1.8.4.11" evidence="1"/>
<dbReference type="EMBL" id="CP000950">
    <property type="protein sequence ID" value="ACA70038.1"/>
    <property type="molecule type" value="Genomic_DNA"/>
</dbReference>
<dbReference type="RefSeq" id="WP_002210165.1">
    <property type="nucleotide sequence ID" value="NZ_CP009792.1"/>
</dbReference>
<dbReference type="SMR" id="B1JML1"/>
<dbReference type="GeneID" id="57975189"/>
<dbReference type="KEGG" id="ypy:YPK_3771"/>
<dbReference type="PATRIC" id="fig|502800.11.peg.121"/>
<dbReference type="GO" id="GO:0005737">
    <property type="term" value="C:cytoplasm"/>
    <property type="evidence" value="ECO:0007669"/>
    <property type="project" value="TreeGrafter"/>
</dbReference>
<dbReference type="GO" id="GO:0036456">
    <property type="term" value="F:L-methionine-(S)-S-oxide reductase activity"/>
    <property type="evidence" value="ECO:0007669"/>
    <property type="project" value="TreeGrafter"/>
</dbReference>
<dbReference type="GO" id="GO:0008113">
    <property type="term" value="F:peptide-methionine (S)-S-oxide reductase activity"/>
    <property type="evidence" value="ECO:0007669"/>
    <property type="project" value="UniProtKB-UniRule"/>
</dbReference>
<dbReference type="GO" id="GO:0034599">
    <property type="term" value="P:cellular response to oxidative stress"/>
    <property type="evidence" value="ECO:0007669"/>
    <property type="project" value="TreeGrafter"/>
</dbReference>
<dbReference type="GO" id="GO:0036211">
    <property type="term" value="P:protein modification process"/>
    <property type="evidence" value="ECO:0007669"/>
    <property type="project" value="UniProtKB-UniRule"/>
</dbReference>
<dbReference type="FunFam" id="3.30.1060.10:FF:000001">
    <property type="entry name" value="Peptide methionine sulfoxide reductase MsrA"/>
    <property type="match status" value="1"/>
</dbReference>
<dbReference type="Gene3D" id="3.30.1060.10">
    <property type="entry name" value="Peptide methionine sulphoxide reductase MsrA"/>
    <property type="match status" value="1"/>
</dbReference>
<dbReference type="HAMAP" id="MF_01401">
    <property type="entry name" value="MsrA"/>
    <property type="match status" value="1"/>
</dbReference>
<dbReference type="InterPro" id="IPR002569">
    <property type="entry name" value="Met_Sox_Rdtase_MsrA_dom"/>
</dbReference>
<dbReference type="InterPro" id="IPR036509">
    <property type="entry name" value="Met_Sox_Rdtase_MsrA_sf"/>
</dbReference>
<dbReference type="InterPro" id="IPR050162">
    <property type="entry name" value="MsrA_MetSO_reductase"/>
</dbReference>
<dbReference type="NCBIfam" id="TIGR00401">
    <property type="entry name" value="msrA"/>
    <property type="match status" value="1"/>
</dbReference>
<dbReference type="PANTHER" id="PTHR42799">
    <property type="entry name" value="MITOCHONDRIAL PEPTIDE METHIONINE SULFOXIDE REDUCTASE"/>
    <property type="match status" value="1"/>
</dbReference>
<dbReference type="PANTHER" id="PTHR42799:SF2">
    <property type="entry name" value="MITOCHONDRIAL PEPTIDE METHIONINE SULFOXIDE REDUCTASE"/>
    <property type="match status" value="1"/>
</dbReference>
<dbReference type="Pfam" id="PF01625">
    <property type="entry name" value="PMSR"/>
    <property type="match status" value="1"/>
</dbReference>
<dbReference type="SUPFAM" id="SSF55068">
    <property type="entry name" value="Peptide methionine sulfoxide reductase"/>
    <property type="match status" value="1"/>
</dbReference>
<gene>
    <name evidence="1" type="primary">msrA</name>
    <name type="ordered locus">YPK_3771</name>
</gene>
<name>MSRA_YERPY</name>
<keyword id="KW-0560">Oxidoreductase</keyword>
<comment type="function">
    <text evidence="1">Has an important function as a repair enzyme for proteins that have been inactivated by oxidation. Catalyzes the reversible oxidation-reduction of methionine sulfoxide in proteins to methionine.</text>
</comment>
<comment type="catalytic activity">
    <reaction evidence="1">
        <text>L-methionyl-[protein] + [thioredoxin]-disulfide + H2O = L-methionyl-(S)-S-oxide-[protein] + [thioredoxin]-dithiol</text>
        <dbReference type="Rhea" id="RHEA:14217"/>
        <dbReference type="Rhea" id="RHEA-COMP:10698"/>
        <dbReference type="Rhea" id="RHEA-COMP:10700"/>
        <dbReference type="Rhea" id="RHEA-COMP:12313"/>
        <dbReference type="Rhea" id="RHEA-COMP:12315"/>
        <dbReference type="ChEBI" id="CHEBI:15377"/>
        <dbReference type="ChEBI" id="CHEBI:16044"/>
        <dbReference type="ChEBI" id="CHEBI:29950"/>
        <dbReference type="ChEBI" id="CHEBI:44120"/>
        <dbReference type="ChEBI" id="CHEBI:50058"/>
        <dbReference type="EC" id="1.8.4.11"/>
    </reaction>
</comment>
<comment type="catalytic activity">
    <reaction evidence="1">
        <text>[thioredoxin]-disulfide + L-methionine + H2O = L-methionine (S)-S-oxide + [thioredoxin]-dithiol</text>
        <dbReference type="Rhea" id="RHEA:19993"/>
        <dbReference type="Rhea" id="RHEA-COMP:10698"/>
        <dbReference type="Rhea" id="RHEA-COMP:10700"/>
        <dbReference type="ChEBI" id="CHEBI:15377"/>
        <dbReference type="ChEBI" id="CHEBI:29950"/>
        <dbReference type="ChEBI" id="CHEBI:50058"/>
        <dbReference type="ChEBI" id="CHEBI:57844"/>
        <dbReference type="ChEBI" id="CHEBI:58772"/>
        <dbReference type="EC" id="1.8.4.11"/>
    </reaction>
</comment>
<comment type="similarity">
    <text evidence="1">Belongs to the MsrA Met sulfoxide reductase family.</text>
</comment>
<accession>B1JML1</accession>
<feature type="chain" id="PRO_1000145449" description="Peptide methionine sulfoxide reductase MsrA">
    <location>
        <begin position="1"/>
        <end position="212"/>
    </location>
</feature>
<feature type="active site" evidence="1">
    <location>
        <position position="52"/>
    </location>
</feature>
<protein>
    <recommendedName>
        <fullName evidence="1">Peptide methionine sulfoxide reductase MsrA</fullName>
        <shortName evidence="1">Protein-methionine-S-oxide reductase</shortName>
        <ecNumber evidence="1">1.8.4.11</ecNumber>
    </recommendedName>
    <alternativeName>
        <fullName evidence="1">Peptide-methionine (S)-S-oxide reductase</fullName>
        <shortName evidence="1">Peptide Met(O) reductase</shortName>
    </alternativeName>
</protein>
<reference key="1">
    <citation type="submission" date="2008-02" db="EMBL/GenBank/DDBJ databases">
        <title>Complete sequence of Yersinia pseudotuberculosis YPIII.</title>
        <authorList>
            <consortium name="US DOE Joint Genome Institute"/>
            <person name="Copeland A."/>
            <person name="Lucas S."/>
            <person name="Lapidus A."/>
            <person name="Glavina del Rio T."/>
            <person name="Dalin E."/>
            <person name="Tice H."/>
            <person name="Bruce D."/>
            <person name="Goodwin L."/>
            <person name="Pitluck S."/>
            <person name="Munk A.C."/>
            <person name="Brettin T."/>
            <person name="Detter J.C."/>
            <person name="Han C."/>
            <person name="Tapia R."/>
            <person name="Schmutz J."/>
            <person name="Larimer F."/>
            <person name="Land M."/>
            <person name="Hauser L."/>
            <person name="Challacombe J.F."/>
            <person name="Green L."/>
            <person name="Lindler L.E."/>
            <person name="Nikolich M.P."/>
            <person name="Richardson P."/>
        </authorList>
    </citation>
    <scope>NUCLEOTIDE SEQUENCE [LARGE SCALE GENOMIC DNA]</scope>
    <source>
        <strain>YPIII</strain>
    </source>
</reference>
<evidence type="ECO:0000255" key="1">
    <source>
        <dbReference type="HAMAP-Rule" id="MF_01401"/>
    </source>
</evidence>
<organism>
    <name type="scientific">Yersinia pseudotuberculosis serotype O:3 (strain YPIII)</name>
    <dbReference type="NCBI Taxonomy" id="502800"/>
    <lineage>
        <taxon>Bacteria</taxon>
        <taxon>Pseudomonadati</taxon>
        <taxon>Pseudomonadota</taxon>
        <taxon>Gammaproteobacteria</taxon>
        <taxon>Enterobacterales</taxon>
        <taxon>Yersiniaceae</taxon>
        <taxon>Yersinia</taxon>
    </lineage>
</organism>